<reference key="1">
    <citation type="journal article" date="2011" name="J. Bacteriol.">
        <title>Genome sequence of Thermotoga sp. strain RQ2, a hyperthermophilic bacterium isolated from a geothermally heated region of the seafloor near Ribeira Quente, the Azores.</title>
        <authorList>
            <person name="Swithers K.S."/>
            <person name="DiPippo J.L."/>
            <person name="Bruce D.C."/>
            <person name="Detter C."/>
            <person name="Tapia R."/>
            <person name="Han S."/>
            <person name="Saunders E."/>
            <person name="Goodwin L.A."/>
            <person name="Han J."/>
            <person name="Woyke T."/>
            <person name="Pitluck S."/>
            <person name="Pennacchio L."/>
            <person name="Nolan M."/>
            <person name="Mikhailova N."/>
            <person name="Lykidis A."/>
            <person name="Land M.L."/>
            <person name="Brettin T."/>
            <person name="Stetter K.O."/>
            <person name="Nelson K.E."/>
            <person name="Gogarten J.P."/>
            <person name="Noll K.M."/>
        </authorList>
    </citation>
    <scope>NUCLEOTIDE SEQUENCE [LARGE SCALE GENOMIC DNA]</scope>
    <source>
        <strain>RQ2</strain>
    </source>
</reference>
<name>RUVC_THESQ</name>
<keyword id="KW-0963">Cytoplasm</keyword>
<keyword id="KW-0227">DNA damage</keyword>
<keyword id="KW-0233">DNA recombination</keyword>
<keyword id="KW-0234">DNA repair</keyword>
<keyword id="KW-0238">DNA-binding</keyword>
<keyword id="KW-0255">Endonuclease</keyword>
<keyword id="KW-0378">Hydrolase</keyword>
<keyword id="KW-0460">Magnesium</keyword>
<keyword id="KW-0479">Metal-binding</keyword>
<keyword id="KW-0540">Nuclease</keyword>
<comment type="function">
    <text evidence="1">The RuvA-RuvB-RuvC complex processes Holliday junction (HJ) DNA during genetic recombination and DNA repair. Endonuclease that resolves HJ intermediates. Cleaves cruciform DNA by making single-stranded nicks across the HJ at symmetrical positions within the homologous arms, yielding a 5'-phosphate and a 3'-hydroxyl group; requires a central core of homology in the junction. The consensus cleavage sequence is 5'-(A/T)TT(C/G)-3'. Cleavage occurs on the 3'-side of the TT dinucleotide at the point of strand exchange. HJ branch migration catalyzed by RuvA-RuvB allows RuvC to scan DNA until it finds its consensus sequence, where it cleaves and resolves the cruciform DNA.</text>
</comment>
<comment type="catalytic activity">
    <reaction evidence="1">
        <text>Endonucleolytic cleavage at a junction such as a reciprocal single-stranded crossover between two homologous DNA duplexes (Holliday junction).</text>
        <dbReference type="EC" id="3.1.21.10"/>
    </reaction>
</comment>
<comment type="cofactor">
    <cofactor evidence="1">
        <name>Mg(2+)</name>
        <dbReference type="ChEBI" id="CHEBI:18420"/>
    </cofactor>
    <text evidence="1">Binds 2 Mg(2+) ion per subunit.</text>
</comment>
<comment type="subunit">
    <text evidence="1">Homodimer which binds Holliday junction (HJ) DNA. The HJ becomes 2-fold symmetrical on binding to RuvC with unstacked arms; it has a different conformation from HJ DNA in complex with RuvA. In the full resolvosome a probable DNA-RuvA(4)-RuvB(12)-RuvC(2) complex forms which resolves the HJ.</text>
</comment>
<comment type="subcellular location">
    <subcellularLocation>
        <location evidence="1">Cytoplasm</location>
    </subcellularLocation>
</comment>
<comment type="similarity">
    <text evidence="1">Belongs to the RuvC family.</text>
</comment>
<feature type="chain" id="PRO_1000090568" description="Crossover junction endodeoxyribonuclease RuvC">
    <location>
        <begin position="1"/>
        <end position="165"/>
    </location>
</feature>
<feature type="active site" evidence="1">
    <location>
        <position position="7"/>
    </location>
</feature>
<feature type="active site" evidence="1">
    <location>
        <position position="67"/>
    </location>
</feature>
<feature type="active site" evidence="1">
    <location>
        <position position="140"/>
    </location>
</feature>
<feature type="binding site" evidence="1">
    <location>
        <position position="7"/>
    </location>
    <ligand>
        <name>Mg(2+)</name>
        <dbReference type="ChEBI" id="CHEBI:18420"/>
        <label>1</label>
    </ligand>
</feature>
<feature type="binding site" evidence="1">
    <location>
        <position position="67"/>
    </location>
    <ligand>
        <name>Mg(2+)</name>
        <dbReference type="ChEBI" id="CHEBI:18420"/>
        <label>2</label>
    </ligand>
</feature>
<feature type="binding site" evidence="1">
    <location>
        <position position="140"/>
    </location>
    <ligand>
        <name>Mg(2+)</name>
        <dbReference type="ChEBI" id="CHEBI:18420"/>
        <label>1</label>
    </ligand>
</feature>
<sequence>MRILGVDPGYGIVGIGIIEVSGNRISHVFHGTIETPKDLPAEKRLKRIYEEFLKVLERFSPDECAMEKLFFVKNVTTAIGVGEARGVLLLALAEKNIPVFEYAPNEVKVSLSGYGRASKKQIQENIKRFLNLSEIPRPDDAADALAIAWCHALQSRARRVTHGEN</sequence>
<organism>
    <name type="scientific">Thermotoga sp. (strain RQ2)</name>
    <dbReference type="NCBI Taxonomy" id="126740"/>
    <lineage>
        <taxon>Bacteria</taxon>
        <taxon>Thermotogati</taxon>
        <taxon>Thermotogota</taxon>
        <taxon>Thermotogae</taxon>
        <taxon>Thermotogales</taxon>
        <taxon>Thermotogaceae</taxon>
        <taxon>Thermotoga</taxon>
    </lineage>
</organism>
<dbReference type="EC" id="3.1.21.10" evidence="1"/>
<dbReference type="EMBL" id="CP000969">
    <property type="protein sequence ID" value="ACB08717.1"/>
    <property type="molecule type" value="Genomic_DNA"/>
</dbReference>
<dbReference type="RefSeq" id="WP_011943007.1">
    <property type="nucleotide sequence ID" value="NC_010483.1"/>
</dbReference>
<dbReference type="SMR" id="B1L8R9"/>
<dbReference type="KEGG" id="trq:TRQ2_0361"/>
<dbReference type="HOGENOM" id="CLU_091257_3_1_0"/>
<dbReference type="Proteomes" id="UP000001687">
    <property type="component" value="Chromosome"/>
</dbReference>
<dbReference type="GO" id="GO:0005737">
    <property type="term" value="C:cytoplasm"/>
    <property type="evidence" value="ECO:0007669"/>
    <property type="project" value="UniProtKB-SubCell"/>
</dbReference>
<dbReference type="GO" id="GO:0048476">
    <property type="term" value="C:Holliday junction resolvase complex"/>
    <property type="evidence" value="ECO:0007669"/>
    <property type="project" value="UniProtKB-UniRule"/>
</dbReference>
<dbReference type="GO" id="GO:0008821">
    <property type="term" value="F:crossover junction DNA endonuclease activity"/>
    <property type="evidence" value="ECO:0007669"/>
    <property type="project" value="UniProtKB-UniRule"/>
</dbReference>
<dbReference type="GO" id="GO:0003677">
    <property type="term" value="F:DNA binding"/>
    <property type="evidence" value="ECO:0007669"/>
    <property type="project" value="UniProtKB-KW"/>
</dbReference>
<dbReference type="GO" id="GO:0000287">
    <property type="term" value="F:magnesium ion binding"/>
    <property type="evidence" value="ECO:0007669"/>
    <property type="project" value="UniProtKB-UniRule"/>
</dbReference>
<dbReference type="GO" id="GO:0006310">
    <property type="term" value="P:DNA recombination"/>
    <property type="evidence" value="ECO:0007669"/>
    <property type="project" value="UniProtKB-UniRule"/>
</dbReference>
<dbReference type="GO" id="GO:0006281">
    <property type="term" value="P:DNA repair"/>
    <property type="evidence" value="ECO:0007669"/>
    <property type="project" value="UniProtKB-UniRule"/>
</dbReference>
<dbReference type="CDD" id="cd16962">
    <property type="entry name" value="RuvC"/>
    <property type="match status" value="1"/>
</dbReference>
<dbReference type="FunFam" id="3.30.420.10:FF:000002">
    <property type="entry name" value="Crossover junction endodeoxyribonuclease RuvC"/>
    <property type="match status" value="1"/>
</dbReference>
<dbReference type="Gene3D" id="3.30.420.10">
    <property type="entry name" value="Ribonuclease H-like superfamily/Ribonuclease H"/>
    <property type="match status" value="1"/>
</dbReference>
<dbReference type="HAMAP" id="MF_00034">
    <property type="entry name" value="RuvC"/>
    <property type="match status" value="1"/>
</dbReference>
<dbReference type="InterPro" id="IPR012337">
    <property type="entry name" value="RNaseH-like_sf"/>
</dbReference>
<dbReference type="InterPro" id="IPR036397">
    <property type="entry name" value="RNaseH_sf"/>
</dbReference>
<dbReference type="InterPro" id="IPR020563">
    <property type="entry name" value="X-over_junc_endoDNase_Mg_BS"/>
</dbReference>
<dbReference type="InterPro" id="IPR002176">
    <property type="entry name" value="X-over_junc_endoDNase_RuvC"/>
</dbReference>
<dbReference type="NCBIfam" id="NF000711">
    <property type="entry name" value="PRK00039.2-1"/>
    <property type="match status" value="1"/>
</dbReference>
<dbReference type="NCBIfam" id="TIGR00228">
    <property type="entry name" value="ruvC"/>
    <property type="match status" value="1"/>
</dbReference>
<dbReference type="PANTHER" id="PTHR30194">
    <property type="entry name" value="CROSSOVER JUNCTION ENDODEOXYRIBONUCLEASE RUVC"/>
    <property type="match status" value="1"/>
</dbReference>
<dbReference type="PANTHER" id="PTHR30194:SF3">
    <property type="entry name" value="CROSSOVER JUNCTION ENDODEOXYRIBONUCLEASE RUVC"/>
    <property type="match status" value="1"/>
</dbReference>
<dbReference type="Pfam" id="PF02075">
    <property type="entry name" value="RuvC"/>
    <property type="match status" value="1"/>
</dbReference>
<dbReference type="PRINTS" id="PR00696">
    <property type="entry name" value="RSOLVASERUVC"/>
</dbReference>
<dbReference type="SUPFAM" id="SSF53098">
    <property type="entry name" value="Ribonuclease H-like"/>
    <property type="match status" value="1"/>
</dbReference>
<dbReference type="PROSITE" id="PS01321">
    <property type="entry name" value="RUVC"/>
    <property type="match status" value="1"/>
</dbReference>
<accession>B1L8R9</accession>
<proteinExistence type="inferred from homology"/>
<gene>
    <name evidence="1" type="primary">ruvC</name>
    <name type="ordered locus">TRQ2_0361</name>
</gene>
<protein>
    <recommendedName>
        <fullName evidence="1">Crossover junction endodeoxyribonuclease RuvC</fullName>
        <ecNumber evidence="1">3.1.21.10</ecNumber>
    </recommendedName>
    <alternativeName>
        <fullName evidence="1">Holliday junction nuclease RuvC</fullName>
    </alternativeName>
    <alternativeName>
        <fullName evidence="1">Holliday junction resolvase RuvC</fullName>
    </alternativeName>
</protein>
<evidence type="ECO:0000255" key="1">
    <source>
        <dbReference type="HAMAP-Rule" id="MF_00034"/>
    </source>
</evidence>